<comment type="function">
    <text evidence="1">Catalyzes the NADPH-dependent reduction of L-glutamate 5-phosphate into L-glutamate 5-semialdehyde and phosphate. The product spontaneously undergoes cyclization to form 1-pyrroline-5-carboxylate.</text>
</comment>
<comment type="catalytic activity">
    <reaction evidence="1">
        <text>L-glutamate 5-semialdehyde + phosphate + NADP(+) = L-glutamyl 5-phosphate + NADPH + H(+)</text>
        <dbReference type="Rhea" id="RHEA:19541"/>
        <dbReference type="ChEBI" id="CHEBI:15378"/>
        <dbReference type="ChEBI" id="CHEBI:43474"/>
        <dbReference type="ChEBI" id="CHEBI:57783"/>
        <dbReference type="ChEBI" id="CHEBI:58066"/>
        <dbReference type="ChEBI" id="CHEBI:58274"/>
        <dbReference type="ChEBI" id="CHEBI:58349"/>
        <dbReference type="EC" id="1.2.1.41"/>
    </reaction>
</comment>
<comment type="pathway">
    <text evidence="1">Amino-acid biosynthesis; L-proline biosynthesis; L-glutamate 5-semialdehyde from L-glutamate: step 2/2.</text>
</comment>
<comment type="subcellular location">
    <subcellularLocation>
        <location evidence="1">Cytoplasm</location>
    </subcellularLocation>
</comment>
<comment type="similarity">
    <text evidence="1">Belongs to the gamma-glutamyl phosphate reductase family.</text>
</comment>
<protein>
    <recommendedName>
        <fullName evidence="1">Gamma-glutamyl phosphate reductase</fullName>
        <shortName evidence="1">GPR</shortName>
        <ecNumber evidence="1">1.2.1.41</ecNumber>
    </recommendedName>
    <alternativeName>
        <fullName evidence="1">Glutamate-5-semialdehyde dehydrogenase</fullName>
    </alternativeName>
    <alternativeName>
        <fullName evidence="1">Glutamyl-gamma-semialdehyde dehydrogenase</fullName>
        <shortName evidence="1">GSA dehydrogenase</shortName>
    </alternativeName>
</protein>
<accession>Q5PF69</accession>
<name>PROA_SALPA</name>
<dbReference type="EC" id="1.2.1.41" evidence="1"/>
<dbReference type="EMBL" id="CP000026">
    <property type="protein sequence ID" value="AAV78313.1"/>
    <property type="molecule type" value="Genomic_DNA"/>
</dbReference>
<dbReference type="RefSeq" id="WP_000893229.1">
    <property type="nucleotide sequence ID" value="NC_006511.1"/>
</dbReference>
<dbReference type="SMR" id="Q5PF69"/>
<dbReference type="KEGG" id="spt:SPA2433"/>
<dbReference type="HOGENOM" id="CLU_030231_0_0_6"/>
<dbReference type="UniPathway" id="UPA00098">
    <property type="reaction ID" value="UER00360"/>
</dbReference>
<dbReference type="Proteomes" id="UP000008185">
    <property type="component" value="Chromosome"/>
</dbReference>
<dbReference type="GO" id="GO:0005737">
    <property type="term" value="C:cytoplasm"/>
    <property type="evidence" value="ECO:0007669"/>
    <property type="project" value="UniProtKB-SubCell"/>
</dbReference>
<dbReference type="GO" id="GO:0004350">
    <property type="term" value="F:glutamate-5-semialdehyde dehydrogenase activity"/>
    <property type="evidence" value="ECO:0007669"/>
    <property type="project" value="UniProtKB-UniRule"/>
</dbReference>
<dbReference type="GO" id="GO:0050661">
    <property type="term" value="F:NADP binding"/>
    <property type="evidence" value="ECO:0007669"/>
    <property type="project" value="InterPro"/>
</dbReference>
<dbReference type="GO" id="GO:0055129">
    <property type="term" value="P:L-proline biosynthetic process"/>
    <property type="evidence" value="ECO:0007669"/>
    <property type="project" value="UniProtKB-UniRule"/>
</dbReference>
<dbReference type="CDD" id="cd07079">
    <property type="entry name" value="ALDH_F18-19_ProA-GPR"/>
    <property type="match status" value="1"/>
</dbReference>
<dbReference type="FunFam" id="3.40.309.10:FF:000006">
    <property type="entry name" value="Gamma-glutamyl phosphate reductase"/>
    <property type="match status" value="1"/>
</dbReference>
<dbReference type="Gene3D" id="3.40.605.10">
    <property type="entry name" value="Aldehyde Dehydrogenase, Chain A, domain 1"/>
    <property type="match status" value="1"/>
</dbReference>
<dbReference type="Gene3D" id="3.40.309.10">
    <property type="entry name" value="Aldehyde Dehydrogenase, Chain A, domain 2"/>
    <property type="match status" value="1"/>
</dbReference>
<dbReference type="HAMAP" id="MF_00412">
    <property type="entry name" value="ProA"/>
    <property type="match status" value="1"/>
</dbReference>
<dbReference type="InterPro" id="IPR016161">
    <property type="entry name" value="Ald_DH/histidinol_DH"/>
</dbReference>
<dbReference type="InterPro" id="IPR016163">
    <property type="entry name" value="Ald_DH_C"/>
</dbReference>
<dbReference type="InterPro" id="IPR016162">
    <property type="entry name" value="Ald_DH_N"/>
</dbReference>
<dbReference type="InterPro" id="IPR015590">
    <property type="entry name" value="Aldehyde_DH_dom"/>
</dbReference>
<dbReference type="InterPro" id="IPR020593">
    <property type="entry name" value="G-glutamylP_reductase_CS"/>
</dbReference>
<dbReference type="InterPro" id="IPR012134">
    <property type="entry name" value="Glu-5-SA_DH"/>
</dbReference>
<dbReference type="InterPro" id="IPR000965">
    <property type="entry name" value="GPR_dom"/>
</dbReference>
<dbReference type="NCBIfam" id="NF001221">
    <property type="entry name" value="PRK00197.1"/>
    <property type="match status" value="1"/>
</dbReference>
<dbReference type="NCBIfam" id="TIGR00407">
    <property type="entry name" value="proA"/>
    <property type="match status" value="1"/>
</dbReference>
<dbReference type="PANTHER" id="PTHR11063:SF8">
    <property type="entry name" value="DELTA-1-PYRROLINE-5-CARBOXYLATE SYNTHASE"/>
    <property type="match status" value="1"/>
</dbReference>
<dbReference type="PANTHER" id="PTHR11063">
    <property type="entry name" value="GLUTAMATE SEMIALDEHYDE DEHYDROGENASE"/>
    <property type="match status" value="1"/>
</dbReference>
<dbReference type="Pfam" id="PF00171">
    <property type="entry name" value="Aldedh"/>
    <property type="match status" value="1"/>
</dbReference>
<dbReference type="PIRSF" id="PIRSF000151">
    <property type="entry name" value="GPR"/>
    <property type="match status" value="1"/>
</dbReference>
<dbReference type="SUPFAM" id="SSF53720">
    <property type="entry name" value="ALDH-like"/>
    <property type="match status" value="1"/>
</dbReference>
<dbReference type="PROSITE" id="PS01223">
    <property type="entry name" value="PROA"/>
    <property type="match status" value="1"/>
</dbReference>
<evidence type="ECO:0000255" key="1">
    <source>
        <dbReference type="HAMAP-Rule" id="MF_00412"/>
    </source>
</evidence>
<sequence length="416" mass="44653">MLEQMGIAAKAASYKLALLSSGEKNRVLEKIADELEAQMESILSANVQDVEQARANGLSEAMLDRLALTPARLKAIADDVRQVCNLADPVGQVIDGGLLDSGLRLERRRVPLGVVGVIYEARPNVTVDVASLCLKTGNAVILRGGKETHRTNAATVRVIQKALKACGLPEAAVQAIDNPDRSLVNEMLRMDKYIDMLIPRGGAGLHKLCREQSTIPVITGGIGVCHIFVDSSADIAPALKIIVNAKTQRPSTCNTVETLLVHQDIAERFLPVLSKQMAESGVTLHGDETVMQVLHGPAKLVPLKPEELDNEFLSLDLNVVVVENMDGAIGHIREHGTQHSDAILTCDMHNAARFVNEVDSAAVYVNASTRFTDGGQFGLGAEVAVSTQKLHARGPMGLEALTTYKWIGFGDGTIRA</sequence>
<keyword id="KW-0028">Amino-acid biosynthesis</keyword>
<keyword id="KW-0963">Cytoplasm</keyword>
<keyword id="KW-0521">NADP</keyword>
<keyword id="KW-0560">Oxidoreductase</keyword>
<keyword id="KW-0641">Proline biosynthesis</keyword>
<feature type="chain" id="PRO_0000189776" description="Gamma-glutamyl phosphate reductase">
    <location>
        <begin position="1"/>
        <end position="416"/>
    </location>
</feature>
<gene>
    <name evidence="1" type="primary">proA</name>
    <name type="ordered locus">SPA2433</name>
</gene>
<reference key="1">
    <citation type="journal article" date="2004" name="Nat. Genet.">
        <title>Comparison of genome degradation in Paratyphi A and Typhi, human-restricted serovars of Salmonella enterica that cause typhoid.</title>
        <authorList>
            <person name="McClelland M."/>
            <person name="Sanderson K.E."/>
            <person name="Clifton S.W."/>
            <person name="Latreille P."/>
            <person name="Porwollik S."/>
            <person name="Sabo A."/>
            <person name="Meyer R."/>
            <person name="Bieri T."/>
            <person name="Ozersky P."/>
            <person name="McLellan M."/>
            <person name="Harkins C.R."/>
            <person name="Wang C."/>
            <person name="Nguyen C."/>
            <person name="Berghoff A."/>
            <person name="Elliott G."/>
            <person name="Kohlberg S."/>
            <person name="Strong C."/>
            <person name="Du F."/>
            <person name="Carter J."/>
            <person name="Kremizki C."/>
            <person name="Layman D."/>
            <person name="Leonard S."/>
            <person name="Sun H."/>
            <person name="Fulton L."/>
            <person name="Nash W."/>
            <person name="Miner T."/>
            <person name="Minx P."/>
            <person name="Delehaunty K."/>
            <person name="Fronick C."/>
            <person name="Magrini V."/>
            <person name="Nhan M."/>
            <person name="Warren W."/>
            <person name="Florea L."/>
            <person name="Spieth J."/>
            <person name="Wilson R.K."/>
        </authorList>
    </citation>
    <scope>NUCLEOTIDE SEQUENCE [LARGE SCALE GENOMIC DNA]</scope>
    <source>
        <strain>ATCC 9150 / SARB42</strain>
    </source>
</reference>
<proteinExistence type="inferred from homology"/>
<organism>
    <name type="scientific">Salmonella paratyphi A (strain ATCC 9150 / SARB42)</name>
    <dbReference type="NCBI Taxonomy" id="295319"/>
    <lineage>
        <taxon>Bacteria</taxon>
        <taxon>Pseudomonadati</taxon>
        <taxon>Pseudomonadota</taxon>
        <taxon>Gammaproteobacteria</taxon>
        <taxon>Enterobacterales</taxon>
        <taxon>Enterobacteriaceae</taxon>
        <taxon>Salmonella</taxon>
    </lineage>
</organism>